<accession>Q47537</accession>
<accession>P77630</accession>
<accession>Q2MC60</accession>
<feature type="signal peptide">
    <location>
        <begin position="1"/>
        <end position="22"/>
    </location>
</feature>
<feature type="chain" id="PRO_0000031865" description="Taurine-binding periplasmic protein">
    <location>
        <begin position="23"/>
        <end position="320"/>
    </location>
</feature>
<feature type="sequence conflict" description="In Ref. 5; AA sequence." evidence="1" ref="5">
    <original>AS</original>
    <variation>SA</variation>
    <location>
        <begin position="62"/>
        <end position="63"/>
    </location>
</feature>
<feature type="sequence conflict" description="In Ref. 5; AA sequence." evidence="1" ref="5">
    <original>R</original>
    <variation>K</variation>
    <location>
        <position position="66"/>
    </location>
</feature>
<feature type="sequence conflict" description="In Ref. 5; AA sequence." evidence="1" ref="5">
    <original>Q</original>
    <variation>P</variation>
    <location>
        <position position="312"/>
    </location>
</feature>
<feature type="strand" evidence="2">
    <location>
        <begin position="24"/>
        <end position="29"/>
    </location>
</feature>
<feature type="helix" evidence="2">
    <location>
        <begin position="37"/>
        <end position="41"/>
    </location>
</feature>
<feature type="helix" evidence="2">
    <location>
        <begin position="44"/>
        <end position="49"/>
    </location>
</feature>
<feature type="strand" evidence="2">
    <location>
        <begin position="52"/>
        <end position="57"/>
    </location>
</feature>
<feature type="helix" evidence="2">
    <location>
        <begin position="61"/>
        <end position="69"/>
    </location>
</feature>
<feature type="strand" evidence="2">
    <location>
        <begin position="74"/>
        <end position="79"/>
    </location>
</feature>
<feature type="helix" evidence="2">
    <location>
        <begin position="80"/>
        <end position="88"/>
    </location>
</feature>
<feature type="strand" evidence="2">
    <location>
        <begin position="92"/>
        <end position="102"/>
    </location>
</feature>
<feature type="strand" evidence="2">
    <location>
        <begin position="106"/>
        <end position="110"/>
    </location>
</feature>
<feature type="helix" evidence="2">
    <location>
        <begin position="117"/>
        <end position="120"/>
    </location>
</feature>
<feature type="strand" evidence="2">
    <location>
        <begin position="124"/>
        <end position="127"/>
    </location>
</feature>
<feature type="helix" evidence="2">
    <location>
        <begin position="132"/>
        <end position="143"/>
    </location>
</feature>
<feature type="helix" evidence="2">
    <location>
        <begin position="148"/>
        <end position="150"/>
    </location>
</feature>
<feature type="strand" evidence="2">
    <location>
        <begin position="151"/>
        <end position="155"/>
    </location>
</feature>
<feature type="helix" evidence="2">
    <location>
        <begin position="158"/>
        <end position="166"/>
    </location>
</feature>
<feature type="strand" evidence="2">
    <location>
        <begin position="171"/>
        <end position="175"/>
    </location>
</feature>
<feature type="helix" evidence="2">
    <location>
        <begin position="179"/>
        <end position="184"/>
    </location>
</feature>
<feature type="strand" evidence="2">
    <location>
        <begin position="187"/>
        <end position="192"/>
    </location>
</feature>
<feature type="helix" evidence="2">
    <location>
        <begin position="193"/>
        <end position="198"/>
    </location>
</feature>
<feature type="strand" evidence="2">
    <location>
        <begin position="204"/>
        <end position="210"/>
    </location>
</feature>
<feature type="helix" evidence="2">
    <location>
        <begin position="211"/>
        <end position="216"/>
    </location>
</feature>
<feature type="helix" evidence="2">
    <location>
        <begin position="218"/>
        <end position="237"/>
    </location>
</feature>
<feature type="helix" evidence="2">
    <location>
        <begin position="239"/>
        <end position="243"/>
    </location>
</feature>
<feature type="helix" evidence="2">
    <location>
        <begin position="246"/>
        <end position="256"/>
    </location>
</feature>
<feature type="helix" evidence="2">
    <location>
        <begin position="260"/>
        <end position="262"/>
    </location>
</feature>
<feature type="helix" evidence="2">
    <location>
        <begin position="263"/>
        <end position="267"/>
    </location>
</feature>
<feature type="helix" evidence="2">
    <location>
        <begin position="275"/>
        <end position="282"/>
    </location>
</feature>
<feature type="helix" evidence="2">
    <location>
        <begin position="285"/>
        <end position="299"/>
    </location>
</feature>
<feature type="helix" evidence="2">
    <location>
        <begin position="311"/>
        <end position="313"/>
    </location>
</feature>
<comment type="function">
    <text>Part of a binding-protein-dependent transport system for taurine.</text>
</comment>
<comment type="subcellular location">
    <subcellularLocation>
        <location evidence="1">Periplasm</location>
    </subcellularLocation>
</comment>
<comment type="induction">
    <text>Repressed by sulfate or cysteine.</text>
</comment>
<comment type="similarity">
    <text evidence="1">Belongs to the bacterial solute-binding protein SsuA/TauA family.</text>
</comment>
<comment type="sequence caution" evidence="1">
    <conflict type="erroneous initiation">
        <sequence resource="EMBL-CDS" id="AAB18088"/>
    </conflict>
    <text>Extended N-terminus.</text>
</comment>
<organism>
    <name type="scientific">Escherichia coli (strain K12)</name>
    <dbReference type="NCBI Taxonomy" id="83333"/>
    <lineage>
        <taxon>Bacteria</taxon>
        <taxon>Pseudomonadati</taxon>
        <taxon>Pseudomonadota</taxon>
        <taxon>Gammaproteobacteria</taxon>
        <taxon>Enterobacterales</taxon>
        <taxon>Enterobacteriaceae</taxon>
        <taxon>Escherichia</taxon>
    </lineage>
</organism>
<proteinExistence type="evidence at protein level"/>
<gene>
    <name type="primary">tauA</name>
    <name type="synonym">ssiA</name>
    <name type="synonym">yaiR</name>
    <name type="ordered locus">b0365</name>
    <name type="ordered locus">JW0357</name>
</gene>
<evidence type="ECO:0000305" key="1"/>
<evidence type="ECO:0007829" key="2">
    <source>
        <dbReference type="PDB" id="6STL"/>
    </source>
</evidence>
<reference key="1">
    <citation type="journal article" date="1996" name="J. Bacteriol.">
        <title>Identification of sulfate starvation-regulated genes in Escherichia coli: a gene cluster involved in the utilization of taurine as a sulfur source.</title>
        <authorList>
            <person name="van der Ploeg J.R."/>
            <person name="Weiss M.A."/>
            <person name="Saller E."/>
            <person name="Nashimoto H."/>
            <person name="Saito N."/>
            <person name="Kertesz M.A."/>
            <person name="Leisinger T."/>
        </authorList>
    </citation>
    <scope>NUCLEOTIDE SEQUENCE [GENOMIC DNA]</scope>
    <source>
        <strain>K12</strain>
    </source>
</reference>
<reference key="2">
    <citation type="submission" date="1997-01" db="EMBL/GenBank/DDBJ databases">
        <title>Sequence of minutes 4-25 of Escherichia coli.</title>
        <authorList>
            <person name="Chung E."/>
            <person name="Allen E."/>
            <person name="Araujo R."/>
            <person name="Aparicio A.M."/>
            <person name="Davis K."/>
            <person name="Duncan M."/>
            <person name="Federspiel N."/>
            <person name="Hyman R."/>
            <person name="Kalman S."/>
            <person name="Komp C."/>
            <person name="Kurdi O."/>
            <person name="Lew H."/>
            <person name="Lin D."/>
            <person name="Namath A."/>
            <person name="Oefner P."/>
            <person name="Roberts D."/>
            <person name="Schramm S."/>
            <person name="Davis R.W."/>
        </authorList>
    </citation>
    <scope>NUCLEOTIDE SEQUENCE [LARGE SCALE GENOMIC DNA]</scope>
    <source>
        <strain>K12 / MG1655 / ATCC 47076</strain>
    </source>
</reference>
<reference key="3">
    <citation type="journal article" date="1997" name="Science">
        <title>The complete genome sequence of Escherichia coli K-12.</title>
        <authorList>
            <person name="Blattner F.R."/>
            <person name="Plunkett G. III"/>
            <person name="Bloch C.A."/>
            <person name="Perna N.T."/>
            <person name="Burland V."/>
            <person name="Riley M."/>
            <person name="Collado-Vides J."/>
            <person name="Glasner J.D."/>
            <person name="Rode C.K."/>
            <person name="Mayhew G.F."/>
            <person name="Gregor J."/>
            <person name="Davis N.W."/>
            <person name="Kirkpatrick H.A."/>
            <person name="Goeden M.A."/>
            <person name="Rose D.J."/>
            <person name="Mau B."/>
            <person name="Shao Y."/>
        </authorList>
    </citation>
    <scope>NUCLEOTIDE SEQUENCE [LARGE SCALE GENOMIC DNA]</scope>
    <source>
        <strain>K12 / MG1655 / ATCC 47076</strain>
    </source>
</reference>
<reference key="4">
    <citation type="journal article" date="2006" name="Mol. Syst. Biol.">
        <title>Highly accurate genome sequences of Escherichia coli K-12 strains MG1655 and W3110.</title>
        <authorList>
            <person name="Hayashi K."/>
            <person name="Morooka N."/>
            <person name="Yamamoto Y."/>
            <person name="Fujita K."/>
            <person name="Isono K."/>
            <person name="Choi S."/>
            <person name="Ohtsubo E."/>
            <person name="Baba T."/>
            <person name="Wanner B.L."/>
            <person name="Mori H."/>
            <person name="Horiuchi T."/>
        </authorList>
    </citation>
    <scope>NUCLEOTIDE SEQUENCE [LARGE SCALE GENOMIC DNA]</scope>
    <source>
        <strain>K12 / W3110 / ATCC 27325 / DSM 5911</strain>
    </source>
</reference>
<reference key="5">
    <citation type="journal article" date="1996" name="Eur. J. Biochem.">
        <title>Analysis of global responses by protein and peptide fingerprinting of proteins isolated by two-dimensional gel electrophoresis. Application to the sulfate-starvation response of Escherichia coli.</title>
        <authorList>
            <person name="Quadroni M."/>
            <person name="Staudenmann W."/>
            <person name="Kertesz M.A."/>
            <person name="James P."/>
        </authorList>
    </citation>
    <scope>PARTIAL PROTEIN SEQUENCE</scope>
    <source>
        <strain>K12 / MC4100 / ATCC 35695 / DSM 6574</strain>
    </source>
</reference>
<protein>
    <recommendedName>
        <fullName>Taurine-binding periplasmic protein</fullName>
    </recommendedName>
    <alternativeName>
        <fullName>Sulfate starvation-induced protein 1</fullName>
        <shortName>SSI1</shortName>
    </alternativeName>
</protein>
<sequence>MAISSRNTLLAALAFIAFQAQAVNVTVAYQTSAEPAKVAQADNTFAKESGATVDWRKFDSGASIVRALASGDVQIGNLGSSPLAVAASQQVPIEVFLLASKLGNSEALVVKKTISKPEDLIGKRIAVPFISTTHYSLLAALKHWGIKPGQVEIVNLQPPAIIAAWQRGDIDGAYVWAPAVNALEKDGKVLTDSEQVGQWGAPTLDVWVVRKDFAEKHPEVVKAFAKSAIDAQQPYIANPDVWLKQPENISKLARLSGVPEGDVPGLVKGNTYLTPQQQTAELTGPVNKAIIDTAQFLKEQGKVPAVANDYSQYVTSRFVQ</sequence>
<dbReference type="EMBL" id="D85613">
    <property type="protein sequence ID" value="BAA12838.1"/>
    <property type="molecule type" value="Genomic_DNA"/>
</dbReference>
<dbReference type="EMBL" id="U73857">
    <property type="protein sequence ID" value="AAB18088.1"/>
    <property type="status" value="ALT_INIT"/>
    <property type="molecule type" value="Genomic_DNA"/>
</dbReference>
<dbReference type="EMBL" id="U00096">
    <property type="protein sequence ID" value="AAC73468.2"/>
    <property type="molecule type" value="Genomic_DNA"/>
</dbReference>
<dbReference type="EMBL" id="AP009048">
    <property type="protein sequence ID" value="BAE76146.1"/>
    <property type="molecule type" value="Genomic_DNA"/>
</dbReference>
<dbReference type="PIR" id="S78604">
    <property type="entry name" value="S78604"/>
</dbReference>
<dbReference type="RefSeq" id="NP_414899.2">
    <property type="nucleotide sequence ID" value="NC_000913.3"/>
</dbReference>
<dbReference type="RefSeq" id="WP_001018417.1">
    <property type="nucleotide sequence ID" value="NZ_LN832404.1"/>
</dbReference>
<dbReference type="PDB" id="6SSY">
    <property type="method" value="X-ray"/>
    <property type="resolution" value="1.62 A"/>
    <property type="chains" value="A/B=22-319"/>
</dbReference>
<dbReference type="PDB" id="6ST0">
    <property type="method" value="X-ray"/>
    <property type="resolution" value="1.50 A"/>
    <property type="chains" value="A/B=22-319"/>
</dbReference>
<dbReference type="PDB" id="6ST1">
    <property type="method" value="X-ray"/>
    <property type="resolution" value="1.55 A"/>
    <property type="chains" value="A/B=22-319"/>
</dbReference>
<dbReference type="PDB" id="6STL">
    <property type="method" value="X-ray"/>
    <property type="resolution" value="1.30 A"/>
    <property type="chains" value="A/B=22-319"/>
</dbReference>
<dbReference type="PDB" id="8PXH">
    <property type="method" value="X-ray"/>
    <property type="resolution" value="1.77 A"/>
    <property type="chains" value="A/B=23-319"/>
</dbReference>
<dbReference type="PDBsum" id="6SSY"/>
<dbReference type="PDBsum" id="6ST0"/>
<dbReference type="PDBsum" id="6ST1"/>
<dbReference type="PDBsum" id="6STL"/>
<dbReference type="PDBsum" id="8PXH"/>
<dbReference type="SMR" id="Q47537"/>
<dbReference type="BioGRID" id="4261088">
    <property type="interactions" value="27"/>
</dbReference>
<dbReference type="ComplexPortal" id="CPX-4312">
    <property type="entry name" value="Taurine ABC transporter complex"/>
</dbReference>
<dbReference type="FunCoup" id="Q47537">
    <property type="interactions" value="253"/>
</dbReference>
<dbReference type="IntAct" id="Q47537">
    <property type="interactions" value="1"/>
</dbReference>
<dbReference type="STRING" id="511145.b0365"/>
<dbReference type="TCDB" id="3.A.1.17.1">
    <property type="family name" value="the atp-binding cassette (abc) superfamily"/>
</dbReference>
<dbReference type="PaxDb" id="511145-b0365"/>
<dbReference type="EnsemblBacteria" id="AAC73468">
    <property type="protein sequence ID" value="AAC73468"/>
    <property type="gene ID" value="b0365"/>
</dbReference>
<dbReference type="GeneID" id="945030"/>
<dbReference type="KEGG" id="ecj:JW0357"/>
<dbReference type="KEGG" id="eco:b0365"/>
<dbReference type="PATRIC" id="fig|1411691.4.peg.1914"/>
<dbReference type="EchoBASE" id="EB3085"/>
<dbReference type="eggNOG" id="COG4521">
    <property type="taxonomic scope" value="Bacteria"/>
</dbReference>
<dbReference type="HOGENOM" id="CLU_028871_3_1_6"/>
<dbReference type="InParanoid" id="Q47537"/>
<dbReference type="OMA" id="TFIWDPV"/>
<dbReference type="OrthoDB" id="286202at2"/>
<dbReference type="PhylomeDB" id="Q47537"/>
<dbReference type="BioCyc" id="EcoCyc:TAUA-MONOMER"/>
<dbReference type="BioCyc" id="MetaCyc:TAUA-MONOMER"/>
<dbReference type="PRO" id="PR:Q47537"/>
<dbReference type="Proteomes" id="UP000000625">
    <property type="component" value="Chromosome"/>
</dbReference>
<dbReference type="GO" id="GO:0055052">
    <property type="term" value="C:ATP-binding cassette (ABC) transporter complex, substrate-binding subunit-containing"/>
    <property type="evidence" value="ECO:0000303"/>
    <property type="project" value="ComplexPortal"/>
</dbReference>
<dbReference type="GO" id="GO:0016020">
    <property type="term" value="C:membrane"/>
    <property type="evidence" value="ECO:0000303"/>
    <property type="project" value="ComplexPortal"/>
</dbReference>
<dbReference type="GO" id="GO:0030288">
    <property type="term" value="C:outer membrane-bounded periplasmic space"/>
    <property type="evidence" value="ECO:0000255"/>
    <property type="project" value="EcoCyc"/>
</dbReference>
<dbReference type="GO" id="GO:0022857">
    <property type="term" value="F:transmembrane transporter activity"/>
    <property type="evidence" value="ECO:0007669"/>
    <property type="project" value="InterPro"/>
</dbReference>
<dbReference type="GO" id="GO:0009970">
    <property type="term" value="P:cellular response to sulfate starvation"/>
    <property type="evidence" value="ECO:0000270"/>
    <property type="project" value="EcoCyc"/>
</dbReference>
<dbReference type="GO" id="GO:0010438">
    <property type="term" value="P:cellular response to sulfur starvation"/>
    <property type="evidence" value="ECO:0000303"/>
    <property type="project" value="ComplexPortal"/>
</dbReference>
<dbReference type="GO" id="GO:0015734">
    <property type="term" value="P:taurine transmembrane transport"/>
    <property type="evidence" value="ECO:0000315"/>
    <property type="project" value="EcoCyc"/>
</dbReference>
<dbReference type="CDD" id="cd13560">
    <property type="entry name" value="PBP2_taurine"/>
    <property type="match status" value="1"/>
</dbReference>
<dbReference type="FunFam" id="3.40.190.10:FF:000128">
    <property type="entry name" value="Taurine ABC transporter substrate-binding protein"/>
    <property type="match status" value="1"/>
</dbReference>
<dbReference type="FunFam" id="3.40.190.10:FF:000141">
    <property type="entry name" value="Taurine ABC transporter, periplasmic taurine-binding protein"/>
    <property type="match status" value="1"/>
</dbReference>
<dbReference type="Gene3D" id="3.40.190.10">
    <property type="entry name" value="Periplasmic binding protein-like II"/>
    <property type="match status" value="2"/>
</dbReference>
<dbReference type="InterPro" id="IPR007210">
    <property type="entry name" value="ABC_Gly_betaine_transp_sub-bd"/>
</dbReference>
<dbReference type="InterPro" id="IPR010068">
    <property type="entry name" value="Peri-bd_TauA"/>
</dbReference>
<dbReference type="InterPro" id="IPR001638">
    <property type="entry name" value="Solute-binding_3/MltF_N"/>
</dbReference>
<dbReference type="NCBIfam" id="NF008553">
    <property type="entry name" value="PRK11480.1"/>
    <property type="match status" value="1"/>
</dbReference>
<dbReference type="NCBIfam" id="TIGR01729">
    <property type="entry name" value="taurine_ABC_bnd"/>
    <property type="match status" value="1"/>
</dbReference>
<dbReference type="PANTHER" id="PTHR30024">
    <property type="entry name" value="ALIPHATIC SULFONATES-BINDING PROTEIN-RELATED"/>
    <property type="match status" value="1"/>
</dbReference>
<dbReference type="PANTHER" id="PTHR30024:SF47">
    <property type="entry name" value="TAURINE-BINDING PERIPLASMIC PROTEIN"/>
    <property type="match status" value="1"/>
</dbReference>
<dbReference type="Pfam" id="PF04069">
    <property type="entry name" value="OpuAC"/>
    <property type="match status" value="1"/>
</dbReference>
<dbReference type="SMART" id="SM00062">
    <property type="entry name" value="PBPb"/>
    <property type="match status" value="1"/>
</dbReference>
<dbReference type="SUPFAM" id="SSF53850">
    <property type="entry name" value="Periplasmic binding protein-like II"/>
    <property type="match status" value="1"/>
</dbReference>
<name>TAUA_ECOLI</name>
<keyword id="KW-0002">3D-structure</keyword>
<keyword id="KW-0903">Direct protein sequencing</keyword>
<keyword id="KW-0574">Periplasm</keyword>
<keyword id="KW-1185">Reference proteome</keyword>
<keyword id="KW-0732">Signal</keyword>
<keyword id="KW-0813">Transport</keyword>